<keyword id="KW-0963">Cytoplasm</keyword>
<keyword id="KW-0255">Endonuclease</keyword>
<keyword id="KW-0378">Hydrolase</keyword>
<keyword id="KW-0464">Manganese</keyword>
<keyword id="KW-0479">Metal-binding</keyword>
<keyword id="KW-0540">Nuclease</keyword>
<proteinExistence type="inferred from homology"/>
<name>RNH2_PSEPF</name>
<reference key="1">
    <citation type="journal article" date="2009" name="Genome Biol.">
        <title>Genomic and genetic analyses of diversity and plant interactions of Pseudomonas fluorescens.</title>
        <authorList>
            <person name="Silby M.W."/>
            <person name="Cerdeno-Tarraga A.M."/>
            <person name="Vernikos G.S."/>
            <person name="Giddens S.R."/>
            <person name="Jackson R.W."/>
            <person name="Preston G.M."/>
            <person name="Zhang X.-X."/>
            <person name="Moon C.D."/>
            <person name="Gehrig S.M."/>
            <person name="Godfrey S.A.C."/>
            <person name="Knight C.G."/>
            <person name="Malone J.G."/>
            <person name="Robinson Z."/>
            <person name="Spiers A.J."/>
            <person name="Harris S."/>
            <person name="Challis G.L."/>
            <person name="Yaxley A.M."/>
            <person name="Harris D."/>
            <person name="Seeger K."/>
            <person name="Murphy L."/>
            <person name="Rutter S."/>
            <person name="Squares R."/>
            <person name="Quail M.A."/>
            <person name="Saunders E."/>
            <person name="Mavromatis K."/>
            <person name="Brettin T.S."/>
            <person name="Bentley S.D."/>
            <person name="Hothersall J."/>
            <person name="Stephens E."/>
            <person name="Thomas C.M."/>
            <person name="Parkhill J."/>
            <person name="Levy S.B."/>
            <person name="Rainey P.B."/>
            <person name="Thomson N.R."/>
        </authorList>
    </citation>
    <scope>NUCLEOTIDE SEQUENCE [LARGE SCALE GENOMIC DNA]</scope>
    <source>
        <strain>Pf0-1</strain>
    </source>
</reference>
<gene>
    <name evidence="1" type="primary">rnhB</name>
    <name type="ordered locus">Pfl01_1115</name>
</gene>
<evidence type="ECO:0000255" key="1">
    <source>
        <dbReference type="HAMAP-Rule" id="MF_00052"/>
    </source>
</evidence>
<evidence type="ECO:0000255" key="2">
    <source>
        <dbReference type="PROSITE-ProRule" id="PRU01319"/>
    </source>
</evidence>
<organism>
    <name type="scientific">Pseudomonas fluorescens (strain Pf0-1)</name>
    <dbReference type="NCBI Taxonomy" id="205922"/>
    <lineage>
        <taxon>Bacteria</taxon>
        <taxon>Pseudomonadati</taxon>
        <taxon>Pseudomonadota</taxon>
        <taxon>Gammaproteobacteria</taxon>
        <taxon>Pseudomonadales</taxon>
        <taxon>Pseudomonadaceae</taxon>
        <taxon>Pseudomonas</taxon>
    </lineage>
</organism>
<comment type="function">
    <text evidence="1">Endonuclease that specifically degrades the RNA of RNA-DNA hybrids.</text>
</comment>
<comment type="catalytic activity">
    <reaction evidence="1">
        <text>Endonucleolytic cleavage to 5'-phosphomonoester.</text>
        <dbReference type="EC" id="3.1.26.4"/>
    </reaction>
</comment>
<comment type="cofactor">
    <cofactor evidence="1">
        <name>Mn(2+)</name>
        <dbReference type="ChEBI" id="CHEBI:29035"/>
    </cofactor>
    <cofactor evidence="1">
        <name>Mg(2+)</name>
        <dbReference type="ChEBI" id="CHEBI:18420"/>
    </cofactor>
    <text evidence="1">Manganese or magnesium. Binds 1 divalent metal ion per monomer in the absence of substrate. May bind a second metal ion after substrate binding.</text>
</comment>
<comment type="subcellular location">
    <subcellularLocation>
        <location evidence="1">Cytoplasm</location>
    </subcellularLocation>
</comment>
<comment type="similarity">
    <text evidence="1">Belongs to the RNase HII family.</text>
</comment>
<accession>Q3KH98</accession>
<sequence>MSKTSMQMGLDFTLVAEVEELVAGVDEVGRGPLCGAVVTAAVILDPNRPILGLNDSKKLTEAKREKLYDEICEKALSWCIARAEVEEIDELNILHATMLAMQRAVAGLHIQPKLAMIDGNRCPKLPMRSEAVVKGDSKVPAIAAASILAKVSRDREMAAFELIYPGYGISGHKGYPTPVHLEALVRLGPTPIHRRSFAPVRQAYEALEGLVQV</sequence>
<dbReference type="EC" id="3.1.26.4" evidence="1"/>
<dbReference type="EMBL" id="CP000094">
    <property type="protein sequence ID" value="ABA72858.1"/>
    <property type="molecule type" value="Genomic_DNA"/>
</dbReference>
<dbReference type="SMR" id="Q3KH98"/>
<dbReference type="KEGG" id="pfo:Pfl01_1115"/>
<dbReference type="eggNOG" id="COG0164">
    <property type="taxonomic scope" value="Bacteria"/>
</dbReference>
<dbReference type="HOGENOM" id="CLU_036532_3_2_6"/>
<dbReference type="Proteomes" id="UP000002704">
    <property type="component" value="Chromosome"/>
</dbReference>
<dbReference type="GO" id="GO:0005737">
    <property type="term" value="C:cytoplasm"/>
    <property type="evidence" value="ECO:0007669"/>
    <property type="project" value="UniProtKB-SubCell"/>
</dbReference>
<dbReference type="GO" id="GO:0032299">
    <property type="term" value="C:ribonuclease H2 complex"/>
    <property type="evidence" value="ECO:0007669"/>
    <property type="project" value="TreeGrafter"/>
</dbReference>
<dbReference type="GO" id="GO:0030145">
    <property type="term" value="F:manganese ion binding"/>
    <property type="evidence" value="ECO:0007669"/>
    <property type="project" value="UniProtKB-UniRule"/>
</dbReference>
<dbReference type="GO" id="GO:0003723">
    <property type="term" value="F:RNA binding"/>
    <property type="evidence" value="ECO:0007669"/>
    <property type="project" value="InterPro"/>
</dbReference>
<dbReference type="GO" id="GO:0004523">
    <property type="term" value="F:RNA-DNA hybrid ribonuclease activity"/>
    <property type="evidence" value="ECO:0007669"/>
    <property type="project" value="UniProtKB-UniRule"/>
</dbReference>
<dbReference type="GO" id="GO:0043137">
    <property type="term" value="P:DNA replication, removal of RNA primer"/>
    <property type="evidence" value="ECO:0007669"/>
    <property type="project" value="TreeGrafter"/>
</dbReference>
<dbReference type="GO" id="GO:0006298">
    <property type="term" value="P:mismatch repair"/>
    <property type="evidence" value="ECO:0007669"/>
    <property type="project" value="TreeGrafter"/>
</dbReference>
<dbReference type="CDD" id="cd07182">
    <property type="entry name" value="RNase_HII_bacteria_HII_like"/>
    <property type="match status" value="1"/>
</dbReference>
<dbReference type="FunFam" id="3.30.420.10:FF:000006">
    <property type="entry name" value="Ribonuclease HII"/>
    <property type="match status" value="1"/>
</dbReference>
<dbReference type="Gene3D" id="3.30.420.10">
    <property type="entry name" value="Ribonuclease H-like superfamily/Ribonuclease H"/>
    <property type="match status" value="1"/>
</dbReference>
<dbReference type="HAMAP" id="MF_00052_B">
    <property type="entry name" value="RNase_HII_B"/>
    <property type="match status" value="1"/>
</dbReference>
<dbReference type="InterPro" id="IPR022898">
    <property type="entry name" value="RNase_HII"/>
</dbReference>
<dbReference type="InterPro" id="IPR001352">
    <property type="entry name" value="RNase_HII/HIII"/>
</dbReference>
<dbReference type="InterPro" id="IPR024567">
    <property type="entry name" value="RNase_HII/HIII_dom"/>
</dbReference>
<dbReference type="InterPro" id="IPR012337">
    <property type="entry name" value="RNaseH-like_sf"/>
</dbReference>
<dbReference type="InterPro" id="IPR036397">
    <property type="entry name" value="RNaseH_sf"/>
</dbReference>
<dbReference type="NCBIfam" id="NF000594">
    <property type="entry name" value="PRK00015.1-1"/>
    <property type="match status" value="1"/>
</dbReference>
<dbReference type="NCBIfam" id="NF000595">
    <property type="entry name" value="PRK00015.1-3"/>
    <property type="match status" value="1"/>
</dbReference>
<dbReference type="NCBIfam" id="NF000596">
    <property type="entry name" value="PRK00015.1-4"/>
    <property type="match status" value="1"/>
</dbReference>
<dbReference type="PANTHER" id="PTHR10954">
    <property type="entry name" value="RIBONUCLEASE H2 SUBUNIT A"/>
    <property type="match status" value="1"/>
</dbReference>
<dbReference type="PANTHER" id="PTHR10954:SF18">
    <property type="entry name" value="RIBONUCLEASE HII"/>
    <property type="match status" value="1"/>
</dbReference>
<dbReference type="Pfam" id="PF01351">
    <property type="entry name" value="RNase_HII"/>
    <property type="match status" value="1"/>
</dbReference>
<dbReference type="SUPFAM" id="SSF53098">
    <property type="entry name" value="Ribonuclease H-like"/>
    <property type="match status" value="1"/>
</dbReference>
<dbReference type="PROSITE" id="PS51975">
    <property type="entry name" value="RNASE_H_2"/>
    <property type="match status" value="1"/>
</dbReference>
<protein>
    <recommendedName>
        <fullName evidence="1">Ribonuclease HII</fullName>
        <shortName evidence="1">RNase HII</shortName>
        <ecNumber evidence="1">3.1.26.4</ecNumber>
    </recommendedName>
</protein>
<feature type="chain" id="PRO_0000235754" description="Ribonuclease HII">
    <location>
        <begin position="1"/>
        <end position="213"/>
    </location>
</feature>
<feature type="domain" description="RNase H type-2" evidence="2">
    <location>
        <begin position="20"/>
        <end position="209"/>
    </location>
</feature>
<feature type="binding site" evidence="1">
    <location>
        <position position="26"/>
    </location>
    <ligand>
        <name>a divalent metal cation</name>
        <dbReference type="ChEBI" id="CHEBI:60240"/>
    </ligand>
</feature>
<feature type="binding site" evidence="1">
    <location>
        <position position="27"/>
    </location>
    <ligand>
        <name>a divalent metal cation</name>
        <dbReference type="ChEBI" id="CHEBI:60240"/>
    </ligand>
</feature>
<feature type="binding site" evidence="1">
    <location>
        <position position="118"/>
    </location>
    <ligand>
        <name>a divalent metal cation</name>
        <dbReference type="ChEBI" id="CHEBI:60240"/>
    </ligand>
</feature>